<dbReference type="EC" id="2.3.1.61" evidence="2"/>
<dbReference type="EMBL" id="CP000029">
    <property type="protein sequence ID" value="AAW54332.1"/>
    <property type="molecule type" value="Genomic_DNA"/>
</dbReference>
<dbReference type="RefSeq" id="WP_002446424.1">
    <property type="nucleotide sequence ID" value="NC_002976.3"/>
</dbReference>
<dbReference type="SMR" id="Q5HPC7"/>
<dbReference type="STRING" id="176279.SERP0985"/>
<dbReference type="KEGG" id="ser:SERP0985"/>
<dbReference type="eggNOG" id="COG0508">
    <property type="taxonomic scope" value="Bacteria"/>
</dbReference>
<dbReference type="HOGENOM" id="CLU_016733_0_0_9"/>
<dbReference type="UniPathway" id="UPA00868">
    <property type="reaction ID" value="UER00840"/>
</dbReference>
<dbReference type="Proteomes" id="UP000000531">
    <property type="component" value="Chromosome"/>
</dbReference>
<dbReference type="GO" id="GO:0005829">
    <property type="term" value="C:cytosol"/>
    <property type="evidence" value="ECO:0007669"/>
    <property type="project" value="TreeGrafter"/>
</dbReference>
<dbReference type="GO" id="GO:0045252">
    <property type="term" value="C:oxoglutarate dehydrogenase complex"/>
    <property type="evidence" value="ECO:0007669"/>
    <property type="project" value="InterPro"/>
</dbReference>
<dbReference type="GO" id="GO:0004149">
    <property type="term" value="F:dihydrolipoyllysine-residue succinyltransferase activity"/>
    <property type="evidence" value="ECO:0007669"/>
    <property type="project" value="UniProtKB-EC"/>
</dbReference>
<dbReference type="GO" id="GO:0033512">
    <property type="term" value="P:L-lysine catabolic process to acetyl-CoA via saccharopine"/>
    <property type="evidence" value="ECO:0007669"/>
    <property type="project" value="UniProtKB-UniPathway"/>
</dbReference>
<dbReference type="GO" id="GO:0006099">
    <property type="term" value="P:tricarboxylic acid cycle"/>
    <property type="evidence" value="ECO:0007669"/>
    <property type="project" value="UniProtKB-KW"/>
</dbReference>
<dbReference type="CDD" id="cd06849">
    <property type="entry name" value="lipoyl_domain"/>
    <property type="match status" value="1"/>
</dbReference>
<dbReference type="FunFam" id="3.30.559.10:FF:000007">
    <property type="entry name" value="Dihydrolipoamide acetyltransferase component of pyruvate dehydrogenase complex"/>
    <property type="match status" value="1"/>
</dbReference>
<dbReference type="Gene3D" id="2.40.50.100">
    <property type="match status" value="1"/>
</dbReference>
<dbReference type="Gene3D" id="3.30.559.10">
    <property type="entry name" value="Chloramphenicol acetyltransferase-like domain"/>
    <property type="match status" value="1"/>
</dbReference>
<dbReference type="Gene3D" id="4.10.320.10">
    <property type="entry name" value="E3-binding domain"/>
    <property type="match status" value="1"/>
</dbReference>
<dbReference type="InterPro" id="IPR003016">
    <property type="entry name" value="2-oxoA_DH_lipoyl-BS"/>
</dbReference>
<dbReference type="InterPro" id="IPR050537">
    <property type="entry name" value="2-oxoacid_dehydrogenase"/>
</dbReference>
<dbReference type="InterPro" id="IPR001078">
    <property type="entry name" value="2-oxoacid_DH_actylTfrase"/>
</dbReference>
<dbReference type="InterPro" id="IPR000089">
    <property type="entry name" value="Biotin_lipoyl"/>
</dbReference>
<dbReference type="InterPro" id="IPR023213">
    <property type="entry name" value="CAT-like_dom_sf"/>
</dbReference>
<dbReference type="InterPro" id="IPR036625">
    <property type="entry name" value="E3-bd_dom_sf"/>
</dbReference>
<dbReference type="InterPro" id="IPR004167">
    <property type="entry name" value="PSBD"/>
</dbReference>
<dbReference type="InterPro" id="IPR011053">
    <property type="entry name" value="Single_hybrid_motif"/>
</dbReference>
<dbReference type="InterPro" id="IPR006255">
    <property type="entry name" value="SucB"/>
</dbReference>
<dbReference type="NCBIfam" id="NF004309">
    <property type="entry name" value="PRK05704.1"/>
    <property type="match status" value="1"/>
</dbReference>
<dbReference type="NCBIfam" id="TIGR01347">
    <property type="entry name" value="sucB"/>
    <property type="match status" value="1"/>
</dbReference>
<dbReference type="PANTHER" id="PTHR43416:SF5">
    <property type="entry name" value="DIHYDROLIPOYLLYSINE-RESIDUE SUCCINYLTRANSFERASE COMPONENT OF 2-OXOGLUTARATE DEHYDROGENASE COMPLEX, MITOCHONDRIAL"/>
    <property type="match status" value="1"/>
</dbReference>
<dbReference type="PANTHER" id="PTHR43416">
    <property type="entry name" value="DIHYDROLIPOYLLYSINE-RESIDUE SUCCINYLTRANSFERASE COMPONENT OF 2-OXOGLUTARATE DEHYDROGENASE COMPLEX, MITOCHONDRIAL-RELATED"/>
    <property type="match status" value="1"/>
</dbReference>
<dbReference type="Pfam" id="PF00198">
    <property type="entry name" value="2-oxoacid_dh"/>
    <property type="match status" value="1"/>
</dbReference>
<dbReference type="Pfam" id="PF00364">
    <property type="entry name" value="Biotin_lipoyl"/>
    <property type="match status" value="1"/>
</dbReference>
<dbReference type="Pfam" id="PF02817">
    <property type="entry name" value="E3_binding"/>
    <property type="match status" value="1"/>
</dbReference>
<dbReference type="SUPFAM" id="SSF52777">
    <property type="entry name" value="CoA-dependent acyltransferases"/>
    <property type="match status" value="1"/>
</dbReference>
<dbReference type="SUPFAM" id="SSF47005">
    <property type="entry name" value="Peripheral subunit-binding domain of 2-oxo acid dehydrogenase complex"/>
    <property type="match status" value="1"/>
</dbReference>
<dbReference type="SUPFAM" id="SSF51230">
    <property type="entry name" value="Single hybrid motif"/>
    <property type="match status" value="1"/>
</dbReference>
<dbReference type="PROSITE" id="PS50968">
    <property type="entry name" value="BIOTINYL_LIPOYL"/>
    <property type="match status" value="1"/>
</dbReference>
<dbReference type="PROSITE" id="PS00189">
    <property type="entry name" value="LIPOYL"/>
    <property type="match status" value="1"/>
</dbReference>
<dbReference type="PROSITE" id="PS51826">
    <property type="entry name" value="PSBD"/>
    <property type="match status" value="1"/>
</dbReference>
<organism>
    <name type="scientific">Staphylococcus epidermidis (strain ATCC 35984 / DSM 28319 / BCRC 17069 / CCUG 31568 / BM 3577 / RP62A)</name>
    <dbReference type="NCBI Taxonomy" id="176279"/>
    <lineage>
        <taxon>Bacteria</taxon>
        <taxon>Bacillati</taxon>
        <taxon>Bacillota</taxon>
        <taxon>Bacilli</taxon>
        <taxon>Bacillales</taxon>
        <taxon>Staphylococcaceae</taxon>
        <taxon>Staphylococcus</taxon>
    </lineage>
</organism>
<feature type="chain" id="PRO_0000288108" description="Dihydrolipoyllysine-residue succinyltransferase component of 2-oxoglutarate dehydrogenase complex">
    <location>
        <begin position="1"/>
        <end position="420"/>
    </location>
</feature>
<feature type="domain" description="Lipoyl-binding" evidence="3">
    <location>
        <begin position="1"/>
        <end position="76"/>
    </location>
</feature>
<feature type="domain" description="Peripheral subunit-binding (PSBD)" evidence="4">
    <location>
        <begin position="124"/>
        <end position="160"/>
    </location>
</feature>
<feature type="region of interest" description="Disordered" evidence="5">
    <location>
        <begin position="75"/>
        <end position="199"/>
    </location>
</feature>
<feature type="compositionally biased region" description="Polar residues" evidence="5">
    <location>
        <begin position="81"/>
        <end position="90"/>
    </location>
</feature>
<feature type="compositionally biased region" description="Basic and acidic residues" evidence="5">
    <location>
        <begin position="91"/>
        <end position="102"/>
    </location>
</feature>
<feature type="compositionally biased region" description="Polar residues" evidence="5">
    <location>
        <begin position="103"/>
        <end position="127"/>
    </location>
</feature>
<feature type="compositionally biased region" description="Basic and acidic residues" evidence="5">
    <location>
        <begin position="149"/>
        <end position="158"/>
    </location>
</feature>
<feature type="compositionally biased region" description="Low complexity" evidence="5">
    <location>
        <begin position="159"/>
        <end position="174"/>
    </location>
</feature>
<feature type="compositionally biased region" description="Polar residues" evidence="5">
    <location>
        <begin position="175"/>
        <end position="186"/>
    </location>
</feature>
<feature type="active site" evidence="2">
    <location>
        <position position="391"/>
    </location>
</feature>
<feature type="active site" evidence="2">
    <location>
        <position position="395"/>
    </location>
</feature>
<feature type="modified residue" description="N6-lipoyllysine" evidence="3">
    <location>
        <position position="42"/>
    </location>
</feature>
<gene>
    <name type="primary">odhB</name>
    <name type="synonym">sucB</name>
    <name type="ordered locus">SERP0985</name>
</gene>
<name>ODO2_STAEQ</name>
<accession>Q5HPC7</accession>
<protein>
    <recommendedName>
        <fullName>Dihydrolipoyllysine-residue succinyltransferase component of 2-oxoglutarate dehydrogenase complex</fullName>
        <ecNumber evidence="2">2.3.1.61</ecNumber>
    </recommendedName>
    <alternativeName>
        <fullName>2-oxoglutarate dehydrogenase complex component E2</fullName>
        <shortName>OGDC-E2</shortName>
    </alternativeName>
    <alternativeName>
        <fullName>Dihydrolipoamide succinyltransferase component of 2-oxoglutarate dehydrogenase complex</fullName>
    </alternativeName>
</protein>
<comment type="function">
    <text evidence="2">E2 component of the 2-oxoglutarate dehydrogenase (OGDH) complex which catalyzes the second step in the conversion of 2-oxoglutarate to succinyl-CoA and CO(2).</text>
</comment>
<comment type="catalytic activity">
    <reaction evidence="2">
        <text>N(6)-[(R)-dihydrolipoyl]-L-lysyl-[protein] + succinyl-CoA = N(6)-[(R)-S(8)-succinyldihydrolipoyl]-L-lysyl-[protein] + CoA</text>
        <dbReference type="Rhea" id="RHEA:15213"/>
        <dbReference type="Rhea" id="RHEA-COMP:10475"/>
        <dbReference type="Rhea" id="RHEA-COMP:20092"/>
        <dbReference type="ChEBI" id="CHEBI:57287"/>
        <dbReference type="ChEBI" id="CHEBI:57292"/>
        <dbReference type="ChEBI" id="CHEBI:83100"/>
        <dbReference type="ChEBI" id="CHEBI:83120"/>
        <dbReference type="EC" id="2.3.1.61"/>
    </reaction>
</comment>
<comment type="cofactor">
    <cofactor evidence="1">
        <name>(R)-lipoate</name>
        <dbReference type="ChEBI" id="CHEBI:83088"/>
    </cofactor>
    <text evidence="1">Binds 1 lipoyl cofactor covalently.</text>
</comment>
<comment type="pathway">
    <text>Amino-acid degradation; L-lysine degradation via saccharopine pathway; glutaryl-CoA from L-lysine: step 6/6.</text>
</comment>
<comment type="subunit">
    <text evidence="2">Forms a 24-polypeptide structural core with octahedral symmetry. Part of the 2-oxoglutarate dehydrogenase (OGDH) complex composed of E1 (2-oxoglutarate dehydrogenase), E2 (dihydrolipoamide succinyltransferase) and E3 (dihydrolipoamide dehydrogenase); the complex contains multiple copies of the three enzymatic components (E1, E2 and E3).</text>
</comment>
<comment type="similarity">
    <text evidence="6">Belongs to the 2-oxoacid dehydrogenase family.</text>
</comment>
<reference key="1">
    <citation type="journal article" date="2005" name="J. Bacteriol.">
        <title>Insights on evolution of virulence and resistance from the complete genome analysis of an early methicillin-resistant Staphylococcus aureus strain and a biofilm-producing methicillin-resistant Staphylococcus epidermidis strain.</title>
        <authorList>
            <person name="Gill S.R."/>
            <person name="Fouts D.E."/>
            <person name="Archer G.L."/>
            <person name="Mongodin E.F."/>
            <person name="DeBoy R.T."/>
            <person name="Ravel J."/>
            <person name="Paulsen I.T."/>
            <person name="Kolonay J.F."/>
            <person name="Brinkac L.M."/>
            <person name="Beanan M.J."/>
            <person name="Dodson R.J."/>
            <person name="Daugherty S.C."/>
            <person name="Madupu R."/>
            <person name="Angiuoli S.V."/>
            <person name="Durkin A.S."/>
            <person name="Haft D.H."/>
            <person name="Vamathevan J.J."/>
            <person name="Khouri H."/>
            <person name="Utterback T.R."/>
            <person name="Lee C."/>
            <person name="Dimitrov G."/>
            <person name="Jiang L."/>
            <person name="Qin H."/>
            <person name="Weidman J."/>
            <person name="Tran K."/>
            <person name="Kang K.H."/>
            <person name="Hance I.R."/>
            <person name="Nelson K.E."/>
            <person name="Fraser C.M."/>
        </authorList>
    </citation>
    <scope>NUCLEOTIDE SEQUENCE [LARGE SCALE GENOMIC DNA]</scope>
    <source>
        <strain>ATCC 35984 / DSM 28319 / BCRC 17069 / CCUG 31568 / BM 3577 / RP62A</strain>
    </source>
</reference>
<keyword id="KW-0012">Acyltransferase</keyword>
<keyword id="KW-0450">Lipoyl</keyword>
<keyword id="KW-1185">Reference proteome</keyword>
<keyword id="KW-0808">Transferase</keyword>
<keyword id="KW-0816">Tricarboxylic acid cycle</keyword>
<evidence type="ECO:0000250" key="1"/>
<evidence type="ECO:0000250" key="2">
    <source>
        <dbReference type="UniProtKB" id="P0AFG6"/>
    </source>
</evidence>
<evidence type="ECO:0000255" key="3">
    <source>
        <dbReference type="PROSITE-ProRule" id="PRU01066"/>
    </source>
</evidence>
<evidence type="ECO:0000255" key="4">
    <source>
        <dbReference type="PROSITE-ProRule" id="PRU01170"/>
    </source>
</evidence>
<evidence type="ECO:0000256" key="5">
    <source>
        <dbReference type="SAM" id="MobiDB-lite"/>
    </source>
</evidence>
<evidence type="ECO:0000305" key="6"/>
<proteinExistence type="inferred from homology"/>
<sequence>MAEVKVPELAESITEGTIAEWLKNVGDNVDKGEAILELETDKVNVEVVSEEAGVLSEQLAEEGDTVEVGQAVAVVGEGQVNTSNDSSNESSQKDEAKEKETPKQSNPNSSESENTQDNSQQRINATPSARRHARKNGVDLSEVSGKGNDVLRKDDVENSQKSSSQTAKSESKSQNSGSKQTNNNPSKPVIREKMSRRKKTAAKKLLEVSNQTAMLTTFNEVDMTNVMDLRKRKKEQFIKDHDGTKLGFMSFFTKAAVAALKKYPEVNAEIDGDDMITKQFYDIGIAVSTDDGLLVPFVRDCDKKNFAEIEQEIANLAVKARDKKLGLDDMVNGSFTITNGGIFGSMMSTPIINGNQAAILGMHSIITRPIAVDKDTIENRPMMYIALSYDHRIIDGKEAVGFLKTIKELIENPEDLLLES</sequence>